<gene>
    <name type="ordered locus">At1g14780</name>
    <name type="ORF">F10B6.18</name>
</gene>
<accession>Q8L612</accession>
<accession>Q9LQV3</accession>
<keyword id="KW-0381">Hypersensitive response</keyword>
<keyword id="KW-0391">Immunity</keyword>
<keyword id="KW-0399">Innate immunity</keyword>
<keyword id="KW-0611">Plant defense</keyword>
<keyword id="KW-1185">Reference proteome</keyword>
<reference key="1">
    <citation type="journal article" date="2000" name="Nature">
        <title>Sequence and analysis of chromosome 1 of the plant Arabidopsis thaliana.</title>
        <authorList>
            <person name="Theologis A."/>
            <person name="Ecker J.R."/>
            <person name="Palm C.J."/>
            <person name="Federspiel N.A."/>
            <person name="Kaul S."/>
            <person name="White O."/>
            <person name="Alonso J."/>
            <person name="Altafi H."/>
            <person name="Araujo R."/>
            <person name="Bowman C.L."/>
            <person name="Brooks S.Y."/>
            <person name="Buehler E."/>
            <person name="Chan A."/>
            <person name="Chao Q."/>
            <person name="Chen H."/>
            <person name="Cheuk R.F."/>
            <person name="Chin C.W."/>
            <person name="Chung M.K."/>
            <person name="Conn L."/>
            <person name="Conway A.B."/>
            <person name="Conway A.R."/>
            <person name="Creasy T.H."/>
            <person name="Dewar K."/>
            <person name="Dunn P."/>
            <person name="Etgu P."/>
            <person name="Feldblyum T.V."/>
            <person name="Feng J.-D."/>
            <person name="Fong B."/>
            <person name="Fujii C.Y."/>
            <person name="Gill J.E."/>
            <person name="Goldsmith A.D."/>
            <person name="Haas B."/>
            <person name="Hansen N.F."/>
            <person name="Hughes B."/>
            <person name="Huizar L."/>
            <person name="Hunter J.L."/>
            <person name="Jenkins J."/>
            <person name="Johnson-Hopson C."/>
            <person name="Khan S."/>
            <person name="Khaykin E."/>
            <person name="Kim C.J."/>
            <person name="Koo H.L."/>
            <person name="Kremenetskaia I."/>
            <person name="Kurtz D.B."/>
            <person name="Kwan A."/>
            <person name="Lam B."/>
            <person name="Langin-Hooper S."/>
            <person name="Lee A."/>
            <person name="Lee J.M."/>
            <person name="Lenz C.A."/>
            <person name="Li J.H."/>
            <person name="Li Y.-P."/>
            <person name="Lin X."/>
            <person name="Liu S.X."/>
            <person name="Liu Z.A."/>
            <person name="Luros J.S."/>
            <person name="Maiti R."/>
            <person name="Marziali A."/>
            <person name="Militscher J."/>
            <person name="Miranda M."/>
            <person name="Nguyen M."/>
            <person name="Nierman W.C."/>
            <person name="Osborne B.I."/>
            <person name="Pai G."/>
            <person name="Peterson J."/>
            <person name="Pham P.K."/>
            <person name="Rizzo M."/>
            <person name="Rooney T."/>
            <person name="Rowley D."/>
            <person name="Sakano H."/>
            <person name="Salzberg S.L."/>
            <person name="Schwartz J.R."/>
            <person name="Shinn P."/>
            <person name="Southwick A.M."/>
            <person name="Sun H."/>
            <person name="Tallon L.J."/>
            <person name="Tambunga G."/>
            <person name="Toriumi M.J."/>
            <person name="Town C.D."/>
            <person name="Utterback T."/>
            <person name="Van Aken S."/>
            <person name="Vaysberg M."/>
            <person name="Vysotskaia V.S."/>
            <person name="Walker M."/>
            <person name="Wu D."/>
            <person name="Yu G."/>
            <person name="Fraser C.M."/>
            <person name="Venter J.C."/>
            <person name="Davis R.W."/>
        </authorList>
    </citation>
    <scope>NUCLEOTIDE SEQUENCE [LARGE SCALE GENOMIC DNA]</scope>
    <source>
        <strain>cv. Columbia</strain>
    </source>
</reference>
<reference key="2">
    <citation type="journal article" date="2017" name="Plant J.">
        <title>Araport11: a complete reannotation of the Arabidopsis thaliana reference genome.</title>
        <authorList>
            <person name="Cheng C.Y."/>
            <person name="Krishnakumar V."/>
            <person name="Chan A.P."/>
            <person name="Thibaud-Nissen F."/>
            <person name="Schobel S."/>
            <person name="Town C.D."/>
        </authorList>
    </citation>
    <scope>GENOME REANNOTATION</scope>
    <source>
        <strain>cv. Columbia</strain>
    </source>
</reference>
<reference key="3">
    <citation type="journal article" date="2003" name="Science">
        <title>Empirical analysis of transcriptional activity in the Arabidopsis genome.</title>
        <authorList>
            <person name="Yamada K."/>
            <person name="Lim J."/>
            <person name="Dale J.M."/>
            <person name="Chen H."/>
            <person name="Shinn P."/>
            <person name="Palm C.J."/>
            <person name="Southwick A.M."/>
            <person name="Wu H.C."/>
            <person name="Kim C.J."/>
            <person name="Nguyen M."/>
            <person name="Pham P.K."/>
            <person name="Cheuk R.F."/>
            <person name="Karlin-Newmann G."/>
            <person name="Liu S.X."/>
            <person name="Lam B."/>
            <person name="Sakano H."/>
            <person name="Wu T."/>
            <person name="Yu G."/>
            <person name="Miranda M."/>
            <person name="Quach H.L."/>
            <person name="Tripp M."/>
            <person name="Chang C.H."/>
            <person name="Lee J.M."/>
            <person name="Toriumi M.J."/>
            <person name="Chan M.M."/>
            <person name="Tang C.C."/>
            <person name="Onodera C.S."/>
            <person name="Deng J.M."/>
            <person name="Akiyama K."/>
            <person name="Ansari Y."/>
            <person name="Arakawa T."/>
            <person name="Banh J."/>
            <person name="Banno F."/>
            <person name="Bowser L."/>
            <person name="Brooks S.Y."/>
            <person name="Carninci P."/>
            <person name="Chao Q."/>
            <person name="Choy N."/>
            <person name="Enju A."/>
            <person name="Goldsmith A.D."/>
            <person name="Gurjal M."/>
            <person name="Hansen N.F."/>
            <person name="Hayashizaki Y."/>
            <person name="Johnson-Hopson C."/>
            <person name="Hsuan V.W."/>
            <person name="Iida K."/>
            <person name="Karnes M."/>
            <person name="Khan S."/>
            <person name="Koesema E."/>
            <person name="Ishida J."/>
            <person name="Jiang P.X."/>
            <person name="Jones T."/>
            <person name="Kawai J."/>
            <person name="Kamiya A."/>
            <person name="Meyers C."/>
            <person name="Nakajima M."/>
            <person name="Narusaka M."/>
            <person name="Seki M."/>
            <person name="Sakurai T."/>
            <person name="Satou M."/>
            <person name="Tamse R."/>
            <person name="Vaysberg M."/>
            <person name="Wallender E.K."/>
            <person name="Wong C."/>
            <person name="Yamamura Y."/>
            <person name="Yuan S."/>
            <person name="Shinozaki K."/>
            <person name="Davis R.W."/>
            <person name="Theologis A."/>
            <person name="Ecker J.R."/>
        </authorList>
    </citation>
    <scope>NUCLEOTIDE SEQUENCE [LARGE SCALE MRNA]</scope>
    <source>
        <strain>cv. Columbia</strain>
    </source>
</reference>
<reference key="4">
    <citation type="journal article" date="2006" name="Plant Mol. Biol.">
        <title>Loss of Necrotic Spotted Lesions 1 associates with cell death and defense responses in Arabidopsis thaliana.</title>
        <authorList>
            <person name="Noutoshi Y."/>
            <person name="Kuromori T."/>
            <person name="Wada T."/>
            <person name="Hirayama T."/>
            <person name="Kamiya A."/>
            <person name="Imura Y."/>
            <person name="Yasuda M."/>
            <person name="Nakashita H."/>
            <person name="Shirasu K."/>
            <person name="Shinozaki K."/>
        </authorList>
    </citation>
    <scope>GENE FAMILY</scope>
</reference>
<proteinExistence type="evidence at transcript level"/>
<evidence type="ECO:0000250" key="1"/>
<evidence type="ECO:0000255" key="2">
    <source>
        <dbReference type="PROSITE-ProRule" id="PRU00745"/>
    </source>
</evidence>
<evidence type="ECO:0000305" key="3"/>
<sequence>MSRDGGDVIETAVKSLGKGFDLTADFRLKYCKDGDGSAGDDRLVVLDQTQNRELHIPGFGVFQNVSADINCDKGERTRFRSDILDFNKMSEYFNQRSSVTGKIPSGNFNATFGFQSGSWATDAANVKSLGLDASVVTLFNLHIHNPNRLRLTDRVRNAVPSSWDPQLLARFIERYGTHVITGVSVGGQDVVVVRQDKSSDLDNDLLRHHLYDLGDQLFTGSCLLSTRRLNKAYHHSHSQPKFPEAFNVFDDKQTVAFNNFSINSQNGITVICAKRGGDGRAKSHSEWLITVPDKPDAINFNFIPITSLLKDVPGSGLLSHAMSLYLRYKPPLMDLQYFLDFSGPRAWAPVHNDLPFGAAPNMASAYPALHINFMGPKLYVNTTPVTSEKNPVTGMRFFLEGKKCNRLAIHLQHLDNTRTTVGEKITDEHIWRGSDQITDNDRYFEPLNGKKFSHVCTVPVKYDPNWIKTTSNHKSQNDVAFIVTGAQLEVKKHGSKSVLHLRLRYTKVSDHYVVQNSWVHGPIGTSQKSGIFSSMSMPLTSGSVHHNMIQKDKNEVVLDSGVFPGGPPVPANNKIVKFVDLSQLCRGPQHSPGHWLVTGVRLYLDKGKLCLHVKFALLHRQRLLVSS</sequence>
<feature type="chain" id="PRO_0000415541" description="MACPF domain-containing protein At1g14780">
    <location>
        <begin position="1"/>
        <end position="627"/>
    </location>
</feature>
<feature type="domain" description="MACPF" evidence="2">
    <location>
        <begin position="1"/>
        <end position="339"/>
    </location>
</feature>
<name>MACP1_ARATH</name>
<organism>
    <name type="scientific">Arabidopsis thaliana</name>
    <name type="common">Mouse-ear cress</name>
    <dbReference type="NCBI Taxonomy" id="3702"/>
    <lineage>
        <taxon>Eukaryota</taxon>
        <taxon>Viridiplantae</taxon>
        <taxon>Streptophyta</taxon>
        <taxon>Embryophyta</taxon>
        <taxon>Tracheophyta</taxon>
        <taxon>Spermatophyta</taxon>
        <taxon>Magnoliopsida</taxon>
        <taxon>eudicotyledons</taxon>
        <taxon>Gunneridae</taxon>
        <taxon>Pentapetalae</taxon>
        <taxon>rosids</taxon>
        <taxon>malvids</taxon>
        <taxon>Brassicales</taxon>
        <taxon>Brassicaceae</taxon>
        <taxon>Camelineae</taxon>
        <taxon>Arabidopsis</taxon>
    </lineage>
</organism>
<protein>
    <recommendedName>
        <fullName>MACPF domain-containing protein At1g14780</fullName>
    </recommendedName>
</protein>
<dbReference type="EMBL" id="AC006917">
    <property type="protein sequence ID" value="AAF79223.1"/>
    <property type="status" value="ALT_SEQ"/>
    <property type="molecule type" value="Genomic_DNA"/>
</dbReference>
<dbReference type="EMBL" id="CP002684">
    <property type="protein sequence ID" value="AEE29225.1"/>
    <property type="molecule type" value="Genomic_DNA"/>
</dbReference>
<dbReference type="EMBL" id="AY099688">
    <property type="protein sequence ID" value="AAM20539.1"/>
    <property type="molecule type" value="mRNA"/>
</dbReference>
<dbReference type="EMBL" id="BT002599">
    <property type="protein sequence ID" value="AAO00959.1"/>
    <property type="molecule type" value="mRNA"/>
</dbReference>
<dbReference type="PIR" id="H86281">
    <property type="entry name" value="H86281"/>
</dbReference>
<dbReference type="RefSeq" id="NP_172931.1">
    <property type="nucleotide sequence ID" value="NM_101347.4"/>
</dbReference>
<dbReference type="FunCoup" id="Q8L612">
    <property type="interactions" value="373"/>
</dbReference>
<dbReference type="STRING" id="3702.Q8L612"/>
<dbReference type="PaxDb" id="3702-AT1G14780.1"/>
<dbReference type="ProteomicsDB" id="238812"/>
<dbReference type="EnsemblPlants" id="AT1G14780.1">
    <property type="protein sequence ID" value="AT1G14780.1"/>
    <property type="gene ID" value="AT1G14780"/>
</dbReference>
<dbReference type="GeneID" id="838043"/>
<dbReference type="Gramene" id="AT1G14780.1">
    <property type="protein sequence ID" value="AT1G14780.1"/>
    <property type="gene ID" value="AT1G14780"/>
</dbReference>
<dbReference type="KEGG" id="ath:AT1G14780"/>
<dbReference type="Araport" id="AT1G14780"/>
<dbReference type="TAIR" id="AT1G14780"/>
<dbReference type="eggNOG" id="ENOG502QRGU">
    <property type="taxonomic scope" value="Eukaryota"/>
</dbReference>
<dbReference type="HOGENOM" id="CLU_034245_1_0_1"/>
<dbReference type="InParanoid" id="Q8L612"/>
<dbReference type="OMA" id="QDCPGYW"/>
<dbReference type="OrthoDB" id="1366754at2759"/>
<dbReference type="PhylomeDB" id="Q8L612"/>
<dbReference type="PRO" id="PR:Q8L612"/>
<dbReference type="Proteomes" id="UP000006548">
    <property type="component" value="Chromosome 1"/>
</dbReference>
<dbReference type="ExpressionAtlas" id="Q8L612">
    <property type="expression patterns" value="baseline and differential"/>
</dbReference>
<dbReference type="GO" id="GO:0009626">
    <property type="term" value="P:plant-type hypersensitive response"/>
    <property type="evidence" value="ECO:0007669"/>
    <property type="project" value="UniProtKB-KW"/>
</dbReference>
<dbReference type="GO" id="GO:2000031">
    <property type="term" value="P:regulation of salicylic acid mediated signaling pathway"/>
    <property type="evidence" value="ECO:0007669"/>
    <property type="project" value="InterPro"/>
</dbReference>
<dbReference type="InterPro" id="IPR044663">
    <property type="entry name" value="CAD1/NSL1-like"/>
</dbReference>
<dbReference type="InterPro" id="IPR020864">
    <property type="entry name" value="MACPF"/>
</dbReference>
<dbReference type="PANTHER" id="PTHR33199">
    <property type="entry name" value="MACPF DOMAIN-CONTAINING PROTEIN CAD1"/>
    <property type="match status" value="1"/>
</dbReference>
<dbReference type="PANTHER" id="PTHR33199:SF4">
    <property type="entry name" value="OS02G0736300 PROTEIN"/>
    <property type="match status" value="1"/>
</dbReference>
<dbReference type="Pfam" id="PF01823">
    <property type="entry name" value="MACPF"/>
    <property type="match status" value="1"/>
</dbReference>
<dbReference type="SMART" id="SM00457">
    <property type="entry name" value="MACPF"/>
    <property type="match status" value="1"/>
</dbReference>
<dbReference type="PROSITE" id="PS51412">
    <property type="entry name" value="MACPF_2"/>
    <property type="match status" value="1"/>
</dbReference>
<comment type="function">
    <text evidence="1">Negatively controls the salicylic acid (SA)-mediated pathway of programmed cell death in plant immunity.</text>
</comment>
<comment type="similarity">
    <text evidence="3">Belongs to the complement C6/C7/C8/C9 (TC 1.C.39) family.</text>
</comment>
<comment type="sequence caution" evidence="3">
    <conflict type="erroneous gene model prediction">
        <sequence resource="EMBL-CDS" id="AAF79223"/>
    </conflict>
</comment>